<reference key="1">
    <citation type="journal article" date="2003" name="Nat. Genet.">
        <title>Comparative analysis of the genome sequences of Bordetella pertussis, Bordetella parapertussis and Bordetella bronchiseptica.</title>
        <authorList>
            <person name="Parkhill J."/>
            <person name="Sebaihia M."/>
            <person name="Preston A."/>
            <person name="Murphy L.D."/>
            <person name="Thomson N.R."/>
            <person name="Harris D.E."/>
            <person name="Holden M.T.G."/>
            <person name="Churcher C.M."/>
            <person name="Bentley S.D."/>
            <person name="Mungall K.L."/>
            <person name="Cerdeno-Tarraga A.-M."/>
            <person name="Temple L."/>
            <person name="James K.D."/>
            <person name="Harris B."/>
            <person name="Quail M.A."/>
            <person name="Achtman M."/>
            <person name="Atkin R."/>
            <person name="Baker S."/>
            <person name="Basham D."/>
            <person name="Bason N."/>
            <person name="Cherevach I."/>
            <person name="Chillingworth T."/>
            <person name="Collins M."/>
            <person name="Cronin A."/>
            <person name="Davis P."/>
            <person name="Doggett J."/>
            <person name="Feltwell T."/>
            <person name="Goble A."/>
            <person name="Hamlin N."/>
            <person name="Hauser H."/>
            <person name="Holroyd S."/>
            <person name="Jagels K."/>
            <person name="Leather S."/>
            <person name="Moule S."/>
            <person name="Norberczak H."/>
            <person name="O'Neil S."/>
            <person name="Ormond D."/>
            <person name="Price C."/>
            <person name="Rabbinowitsch E."/>
            <person name="Rutter S."/>
            <person name="Sanders M."/>
            <person name="Saunders D."/>
            <person name="Seeger K."/>
            <person name="Sharp S."/>
            <person name="Simmonds M."/>
            <person name="Skelton J."/>
            <person name="Squares R."/>
            <person name="Squares S."/>
            <person name="Stevens K."/>
            <person name="Unwin L."/>
            <person name="Whitehead S."/>
            <person name="Barrell B.G."/>
            <person name="Maskell D.J."/>
        </authorList>
    </citation>
    <scope>NUCLEOTIDE SEQUENCE [LARGE SCALE GENOMIC DNA]</scope>
    <source>
        <strain>Tohama I / ATCC BAA-589 / NCTC 13251</strain>
    </source>
</reference>
<name>MURD_BORPE</name>
<gene>
    <name evidence="1" type="primary">murD</name>
    <name type="ordered locus">BP3025</name>
</gene>
<dbReference type="EC" id="6.3.2.9" evidence="1"/>
<dbReference type="EMBL" id="BX640420">
    <property type="protein sequence ID" value="CAE43296.1"/>
    <property type="molecule type" value="Genomic_DNA"/>
</dbReference>
<dbReference type="RefSeq" id="NP_881600.1">
    <property type="nucleotide sequence ID" value="NC_002929.2"/>
</dbReference>
<dbReference type="RefSeq" id="WP_010931259.1">
    <property type="nucleotide sequence ID" value="NZ_CP039022.1"/>
</dbReference>
<dbReference type="SMR" id="Q7VUQ1"/>
<dbReference type="STRING" id="257313.BP3025"/>
<dbReference type="PaxDb" id="257313-BP3025"/>
<dbReference type="GeneID" id="69602948"/>
<dbReference type="KEGG" id="bpe:BP3025"/>
<dbReference type="PATRIC" id="fig|257313.5.peg.3271"/>
<dbReference type="eggNOG" id="COG0771">
    <property type="taxonomic scope" value="Bacteria"/>
</dbReference>
<dbReference type="HOGENOM" id="CLU_032540_1_1_4"/>
<dbReference type="UniPathway" id="UPA00219"/>
<dbReference type="Proteomes" id="UP000002676">
    <property type="component" value="Chromosome"/>
</dbReference>
<dbReference type="GO" id="GO:0005737">
    <property type="term" value="C:cytoplasm"/>
    <property type="evidence" value="ECO:0007669"/>
    <property type="project" value="UniProtKB-SubCell"/>
</dbReference>
<dbReference type="GO" id="GO:0005524">
    <property type="term" value="F:ATP binding"/>
    <property type="evidence" value="ECO:0007669"/>
    <property type="project" value="UniProtKB-UniRule"/>
</dbReference>
<dbReference type="GO" id="GO:0004326">
    <property type="term" value="F:tetrahydrofolylpolyglutamate synthase activity"/>
    <property type="evidence" value="ECO:0007669"/>
    <property type="project" value="InterPro"/>
</dbReference>
<dbReference type="GO" id="GO:0008764">
    <property type="term" value="F:UDP-N-acetylmuramoylalanine-D-glutamate ligase activity"/>
    <property type="evidence" value="ECO:0007669"/>
    <property type="project" value="UniProtKB-UniRule"/>
</dbReference>
<dbReference type="GO" id="GO:0051301">
    <property type="term" value="P:cell division"/>
    <property type="evidence" value="ECO:0007669"/>
    <property type="project" value="UniProtKB-KW"/>
</dbReference>
<dbReference type="GO" id="GO:0071555">
    <property type="term" value="P:cell wall organization"/>
    <property type="evidence" value="ECO:0007669"/>
    <property type="project" value="UniProtKB-KW"/>
</dbReference>
<dbReference type="GO" id="GO:0009252">
    <property type="term" value="P:peptidoglycan biosynthetic process"/>
    <property type="evidence" value="ECO:0007669"/>
    <property type="project" value="UniProtKB-UniRule"/>
</dbReference>
<dbReference type="GO" id="GO:0008360">
    <property type="term" value="P:regulation of cell shape"/>
    <property type="evidence" value="ECO:0007669"/>
    <property type="project" value="UniProtKB-KW"/>
</dbReference>
<dbReference type="Gene3D" id="3.90.190.20">
    <property type="entry name" value="Mur ligase, C-terminal domain"/>
    <property type="match status" value="1"/>
</dbReference>
<dbReference type="Gene3D" id="3.40.1190.10">
    <property type="entry name" value="Mur-like, catalytic domain"/>
    <property type="match status" value="1"/>
</dbReference>
<dbReference type="Gene3D" id="3.40.50.720">
    <property type="entry name" value="NAD(P)-binding Rossmann-like Domain"/>
    <property type="match status" value="1"/>
</dbReference>
<dbReference type="HAMAP" id="MF_00639">
    <property type="entry name" value="MurD"/>
    <property type="match status" value="1"/>
</dbReference>
<dbReference type="InterPro" id="IPR018109">
    <property type="entry name" value="Folylpolyglutamate_synth_CS"/>
</dbReference>
<dbReference type="InterPro" id="IPR036565">
    <property type="entry name" value="Mur-like_cat_sf"/>
</dbReference>
<dbReference type="InterPro" id="IPR004101">
    <property type="entry name" value="Mur_ligase_C"/>
</dbReference>
<dbReference type="InterPro" id="IPR036615">
    <property type="entry name" value="Mur_ligase_C_dom_sf"/>
</dbReference>
<dbReference type="InterPro" id="IPR013221">
    <property type="entry name" value="Mur_ligase_cen"/>
</dbReference>
<dbReference type="InterPro" id="IPR005762">
    <property type="entry name" value="MurD"/>
</dbReference>
<dbReference type="NCBIfam" id="TIGR01087">
    <property type="entry name" value="murD"/>
    <property type="match status" value="1"/>
</dbReference>
<dbReference type="PANTHER" id="PTHR43692">
    <property type="entry name" value="UDP-N-ACETYLMURAMOYLALANINE--D-GLUTAMATE LIGASE"/>
    <property type="match status" value="1"/>
</dbReference>
<dbReference type="PANTHER" id="PTHR43692:SF1">
    <property type="entry name" value="UDP-N-ACETYLMURAMOYLALANINE--D-GLUTAMATE LIGASE"/>
    <property type="match status" value="1"/>
</dbReference>
<dbReference type="Pfam" id="PF02875">
    <property type="entry name" value="Mur_ligase_C"/>
    <property type="match status" value="1"/>
</dbReference>
<dbReference type="Pfam" id="PF08245">
    <property type="entry name" value="Mur_ligase_M"/>
    <property type="match status" value="1"/>
</dbReference>
<dbReference type="Pfam" id="PF21799">
    <property type="entry name" value="MurD-like_N"/>
    <property type="match status" value="1"/>
</dbReference>
<dbReference type="SUPFAM" id="SSF51984">
    <property type="entry name" value="MurCD N-terminal domain"/>
    <property type="match status" value="1"/>
</dbReference>
<dbReference type="SUPFAM" id="SSF53623">
    <property type="entry name" value="MurD-like peptide ligases, catalytic domain"/>
    <property type="match status" value="1"/>
</dbReference>
<dbReference type="SUPFAM" id="SSF53244">
    <property type="entry name" value="MurD-like peptide ligases, peptide-binding domain"/>
    <property type="match status" value="1"/>
</dbReference>
<accession>Q7VUQ1</accession>
<organism>
    <name type="scientific">Bordetella pertussis (strain Tohama I / ATCC BAA-589 / NCTC 13251)</name>
    <dbReference type="NCBI Taxonomy" id="257313"/>
    <lineage>
        <taxon>Bacteria</taxon>
        <taxon>Pseudomonadati</taxon>
        <taxon>Pseudomonadota</taxon>
        <taxon>Betaproteobacteria</taxon>
        <taxon>Burkholderiales</taxon>
        <taxon>Alcaligenaceae</taxon>
        <taxon>Bordetella</taxon>
    </lineage>
</organism>
<protein>
    <recommendedName>
        <fullName evidence="1">UDP-N-acetylmuramoylalanine--D-glutamate ligase</fullName>
        <ecNumber evidence="1">6.3.2.9</ecNumber>
    </recommendedName>
    <alternativeName>
        <fullName evidence="1">D-glutamic acid-adding enzyme</fullName>
    </alternativeName>
    <alternativeName>
        <fullName evidence="1">UDP-N-acetylmuramoyl-L-alanyl-D-glutamate synthetase</fullName>
    </alternativeName>
</protein>
<feature type="chain" id="PRO_0000108978" description="UDP-N-acetylmuramoylalanine--D-glutamate ligase">
    <location>
        <begin position="1"/>
        <end position="510"/>
    </location>
</feature>
<feature type="region of interest" description="Disordered" evidence="2">
    <location>
        <begin position="294"/>
        <end position="316"/>
    </location>
</feature>
<feature type="binding site" evidence="1">
    <location>
        <begin position="138"/>
        <end position="144"/>
    </location>
    <ligand>
        <name>ATP</name>
        <dbReference type="ChEBI" id="CHEBI:30616"/>
    </ligand>
</feature>
<sequence>MNTTETSRAAAPLVLILGLGETGVAAARWYARQGSPLRVTDSRAQPGGLAALQAALADATVEYRLGCGEQFPPDLLDGVAQIVLSPGLVPHESPTRELLEQARERNVEVVGEIELFARALAGLAESREYRPRVLAITGTNGKTTVTALTRQLIEAGGMSARAAGNISPAALAALMDALDQDDLPQVWVLELSSFQLETTRTLAPDAAVVLNVTQDHLDWHGDMQAYAQAKARILKPARLAIVNRDDPLAVAMVESLQALNVRSFGRDVPALVGDMGLELGQGVAWLTACESNDFDEPAPAPRRKKDAPPPTRAGGRMSRLMPVDALRIRGVHNALNALAAMQLARSLDLGWGPMLRTLRDYAGEPHRAELVRSIGDVDYINDSKGTNVGATVAALEGLGQQVVLIAGGQGKGQDFSPLVPVVRRHARAVVLIGVDGAAIGKVLEPTGVPCAAAADMREAVRRAAELAQPGDAVLLSPACASFDMFRNYPHRGEVFAAEVRELALDRGEVA</sequence>
<comment type="function">
    <text evidence="1">Cell wall formation. Catalyzes the addition of glutamate to the nucleotide precursor UDP-N-acetylmuramoyl-L-alanine (UMA).</text>
</comment>
<comment type="catalytic activity">
    <reaction evidence="1">
        <text>UDP-N-acetyl-alpha-D-muramoyl-L-alanine + D-glutamate + ATP = UDP-N-acetyl-alpha-D-muramoyl-L-alanyl-D-glutamate + ADP + phosphate + H(+)</text>
        <dbReference type="Rhea" id="RHEA:16429"/>
        <dbReference type="ChEBI" id="CHEBI:15378"/>
        <dbReference type="ChEBI" id="CHEBI:29986"/>
        <dbReference type="ChEBI" id="CHEBI:30616"/>
        <dbReference type="ChEBI" id="CHEBI:43474"/>
        <dbReference type="ChEBI" id="CHEBI:83898"/>
        <dbReference type="ChEBI" id="CHEBI:83900"/>
        <dbReference type="ChEBI" id="CHEBI:456216"/>
        <dbReference type="EC" id="6.3.2.9"/>
    </reaction>
</comment>
<comment type="pathway">
    <text evidence="1">Cell wall biogenesis; peptidoglycan biosynthesis.</text>
</comment>
<comment type="subcellular location">
    <subcellularLocation>
        <location evidence="1">Cytoplasm</location>
    </subcellularLocation>
</comment>
<comment type="similarity">
    <text evidence="1">Belongs to the MurCDEF family.</text>
</comment>
<proteinExistence type="inferred from homology"/>
<keyword id="KW-0067">ATP-binding</keyword>
<keyword id="KW-0131">Cell cycle</keyword>
<keyword id="KW-0132">Cell division</keyword>
<keyword id="KW-0133">Cell shape</keyword>
<keyword id="KW-0961">Cell wall biogenesis/degradation</keyword>
<keyword id="KW-0963">Cytoplasm</keyword>
<keyword id="KW-0436">Ligase</keyword>
<keyword id="KW-0547">Nucleotide-binding</keyword>
<keyword id="KW-0573">Peptidoglycan synthesis</keyword>
<keyword id="KW-1185">Reference proteome</keyword>
<evidence type="ECO:0000255" key="1">
    <source>
        <dbReference type="HAMAP-Rule" id="MF_00639"/>
    </source>
</evidence>
<evidence type="ECO:0000256" key="2">
    <source>
        <dbReference type="SAM" id="MobiDB-lite"/>
    </source>
</evidence>